<name>ATPB_OLEA2</name>
<accession>Q313W0</accession>
<feature type="chain" id="PRO_0000254253" description="ATP synthase subunit beta">
    <location>
        <begin position="1"/>
        <end position="470"/>
    </location>
</feature>
<feature type="binding site" evidence="1">
    <location>
        <begin position="155"/>
        <end position="162"/>
    </location>
    <ligand>
        <name>ATP</name>
        <dbReference type="ChEBI" id="CHEBI:30616"/>
    </ligand>
</feature>
<sequence length="470" mass="50824">MSNIGKITQVIGAVVDVEFADGNLPNILNALVIKNPNNADCPELICEVAQHLGDNVVRTIAMDATEGLVRGMEVTDTGNPIMVPVGSASLGRIMNVVGRPVDEMGDIDAAKSLPIHRPAPEFNEQNTNVELLETGIKVVDLLIPFPKGGKMGLFGGAGVGKTVILMEMINNIAKQHGGISVFAGVGERTREGNDLYHEMKDAGVLEKAALVYGQMNEPPGARARVALTALACAEYFRDEENQDVLLFVDNIFRFTQAGSEVSALLGRMPSAVGYQPTLGTDLGGLQERITSTTKGSITSVQAVYVPADDLTDPAPATTFSHLDGTLVLSRQIAELGIYPAVDPLDSTSRILDPNVVGAEHYSVAREVQMVLQKYKDLQDIIAILGMDELSDEDKQTVARARRIQRFLSQPFHVAEVFTGTPGVYVKLEETIKAFRGILNGEYDHLAENDFYMVGGIEMAVERYNQRQQAA</sequence>
<dbReference type="EC" id="7.1.2.2" evidence="1"/>
<dbReference type="EMBL" id="CP000112">
    <property type="protein sequence ID" value="ABB37786.1"/>
    <property type="molecule type" value="Genomic_DNA"/>
</dbReference>
<dbReference type="RefSeq" id="WP_011367027.1">
    <property type="nucleotide sequence ID" value="NC_007519.1"/>
</dbReference>
<dbReference type="SMR" id="Q313W0"/>
<dbReference type="STRING" id="207559.Dde_0985"/>
<dbReference type="KEGG" id="dde:Dde_0985"/>
<dbReference type="eggNOG" id="COG0055">
    <property type="taxonomic scope" value="Bacteria"/>
</dbReference>
<dbReference type="HOGENOM" id="CLU_022398_0_2_7"/>
<dbReference type="Proteomes" id="UP000002710">
    <property type="component" value="Chromosome"/>
</dbReference>
<dbReference type="GO" id="GO:0005886">
    <property type="term" value="C:plasma membrane"/>
    <property type="evidence" value="ECO:0007669"/>
    <property type="project" value="UniProtKB-SubCell"/>
</dbReference>
<dbReference type="GO" id="GO:0045259">
    <property type="term" value="C:proton-transporting ATP synthase complex"/>
    <property type="evidence" value="ECO:0007669"/>
    <property type="project" value="UniProtKB-KW"/>
</dbReference>
<dbReference type="GO" id="GO:0005524">
    <property type="term" value="F:ATP binding"/>
    <property type="evidence" value="ECO:0007669"/>
    <property type="project" value="UniProtKB-UniRule"/>
</dbReference>
<dbReference type="GO" id="GO:0016887">
    <property type="term" value="F:ATP hydrolysis activity"/>
    <property type="evidence" value="ECO:0007669"/>
    <property type="project" value="InterPro"/>
</dbReference>
<dbReference type="GO" id="GO:0046933">
    <property type="term" value="F:proton-transporting ATP synthase activity, rotational mechanism"/>
    <property type="evidence" value="ECO:0007669"/>
    <property type="project" value="UniProtKB-UniRule"/>
</dbReference>
<dbReference type="CDD" id="cd18110">
    <property type="entry name" value="ATP-synt_F1_beta_C"/>
    <property type="match status" value="1"/>
</dbReference>
<dbReference type="CDD" id="cd18115">
    <property type="entry name" value="ATP-synt_F1_beta_N"/>
    <property type="match status" value="1"/>
</dbReference>
<dbReference type="CDD" id="cd01133">
    <property type="entry name" value="F1-ATPase_beta_CD"/>
    <property type="match status" value="1"/>
</dbReference>
<dbReference type="FunFam" id="1.10.1140.10:FF:000001">
    <property type="entry name" value="ATP synthase subunit beta"/>
    <property type="match status" value="1"/>
</dbReference>
<dbReference type="FunFam" id="2.40.10.170:FF:000005">
    <property type="entry name" value="ATP synthase subunit beta"/>
    <property type="match status" value="1"/>
</dbReference>
<dbReference type="FunFam" id="3.40.50.300:FF:000026">
    <property type="entry name" value="ATP synthase subunit beta"/>
    <property type="match status" value="1"/>
</dbReference>
<dbReference type="Gene3D" id="2.40.10.170">
    <property type="match status" value="1"/>
</dbReference>
<dbReference type="Gene3D" id="1.10.1140.10">
    <property type="entry name" value="Bovine Mitochondrial F1-atpase, Atp Synthase Beta Chain, Chain D, domain 3"/>
    <property type="match status" value="1"/>
</dbReference>
<dbReference type="Gene3D" id="3.40.50.300">
    <property type="entry name" value="P-loop containing nucleotide triphosphate hydrolases"/>
    <property type="match status" value="1"/>
</dbReference>
<dbReference type="HAMAP" id="MF_01347">
    <property type="entry name" value="ATP_synth_beta_bact"/>
    <property type="match status" value="1"/>
</dbReference>
<dbReference type="InterPro" id="IPR003593">
    <property type="entry name" value="AAA+_ATPase"/>
</dbReference>
<dbReference type="InterPro" id="IPR055190">
    <property type="entry name" value="ATP-synt_VA_C"/>
</dbReference>
<dbReference type="InterPro" id="IPR005722">
    <property type="entry name" value="ATP_synth_F1_bsu"/>
</dbReference>
<dbReference type="InterPro" id="IPR020003">
    <property type="entry name" value="ATPase_a/bsu_AS"/>
</dbReference>
<dbReference type="InterPro" id="IPR050053">
    <property type="entry name" value="ATPase_alpha/beta_chains"/>
</dbReference>
<dbReference type="InterPro" id="IPR004100">
    <property type="entry name" value="ATPase_F1/V1/A1_a/bsu_N"/>
</dbReference>
<dbReference type="InterPro" id="IPR036121">
    <property type="entry name" value="ATPase_F1/V1/A1_a/bsu_N_sf"/>
</dbReference>
<dbReference type="InterPro" id="IPR000194">
    <property type="entry name" value="ATPase_F1/V1/A1_a/bsu_nucl-bd"/>
</dbReference>
<dbReference type="InterPro" id="IPR024034">
    <property type="entry name" value="ATPase_F1/V1_b/a_C"/>
</dbReference>
<dbReference type="InterPro" id="IPR027417">
    <property type="entry name" value="P-loop_NTPase"/>
</dbReference>
<dbReference type="NCBIfam" id="TIGR01039">
    <property type="entry name" value="atpD"/>
    <property type="match status" value="1"/>
</dbReference>
<dbReference type="PANTHER" id="PTHR15184">
    <property type="entry name" value="ATP SYNTHASE"/>
    <property type="match status" value="1"/>
</dbReference>
<dbReference type="PANTHER" id="PTHR15184:SF71">
    <property type="entry name" value="ATP SYNTHASE SUBUNIT BETA, MITOCHONDRIAL"/>
    <property type="match status" value="1"/>
</dbReference>
<dbReference type="Pfam" id="PF00006">
    <property type="entry name" value="ATP-synt_ab"/>
    <property type="match status" value="1"/>
</dbReference>
<dbReference type="Pfam" id="PF02874">
    <property type="entry name" value="ATP-synt_ab_N"/>
    <property type="match status" value="1"/>
</dbReference>
<dbReference type="Pfam" id="PF22919">
    <property type="entry name" value="ATP-synt_VA_C"/>
    <property type="match status" value="1"/>
</dbReference>
<dbReference type="PIRSF" id="PIRSF039072">
    <property type="entry name" value="ATPase_subunit_beta"/>
    <property type="match status" value="1"/>
</dbReference>
<dbReference type="SMART" id="SM00382">
    <property type="entry name" value="AAA"/>
    <property type="match status" value="1"/>
</dbReference>
<dbReference type="SUPFAM" id="SSF47917">
    <property type="entry name" value="C-terminal domain of alpha and beta subunits of F1 ATP synthase"/>
    <property type="match status" value="1"/>
</dbReference>
<dbReference type="SUPFAM" id="SSF50615">
    <property type="entry name" value="N-terminal domain of alpha and beta subunits of F1 ATP synthase"/>
    <property type="match status" value="1"/>
</dbReference>
<dbReference type="SUPFAM" id="SSF52540">
    <property type="entry name" value="P-loop containing nucleoside triphosphate hydrolases"/>
    <property type="match status" value="1"/>
</dbReference>
<dbReference type="PROSITE" id="PS00152">
    <property type="entry name" value="ATPASE_ALPHA_BETA"/>
    <property type="match status" value="1"/>
</dbReference>
<protein>
    <recommendedName>
        <fullName evidence="1">ATP synthase subunit beta</fullName>
        <ecNumber evidence="1">7.1.2.2</ecNumber>
    </recommendedName>
    <alternativeName>
        <fullName evidence="1">ATP synthase F1 sector subunit beta</fullName>
    </alternativeName>
    <alternativeName>
        <fullName evidence="1">F-ATPase subunit beta</fullName>
    </alternativeName>
</protein>
<evidence type="ECO:0000255" key="1">
    <source>
        <dbReference type="HAMAP-Rule" id="MF_01347"/>
    </source>
</evidence>
<gene>
    <name evidence="1" type="primary">atpD</name>
    <name type="ordered locus">Dde_0985</name>
</gene>
<comment type="function">
    <text evidence="1">Produces ATP from ADP in the presence of a proton gradient across the membrane. The catalytic sites are hosted primarily by the beta subunits.</text>
</comment>
<comment type="catalytic activity">
    <reaction evidence="1">
        <text>ATP + H2O + 4 H(+)(in) = ADP + phosphate + 5 H(+)(out)</text>
        <dbReference type="Rhea" id="RHEA:57720"/>
        <dbReference type="ChEBI" id="CHEBI:15377"/>
        <dbReference type="ChEBI" id="CHEBI:15378"/>
        <dbReference type="ChEBI" id="CHEBI:30616"/>
        <dbReference type="ChEBI" id="CHEBI:43474"/>
        <dbReference type="ChEBI" id="CHEBI:456216"/>
        <dbReference type="EC" id="7.1.2.2"/>
    </reaction>
</comment>
<comment type="subunit">
    <text evidence="1">F-type ATPases have 2 components, CF(1) - the catalytic core - and CF(0) - the membrane proton channel. CF(1) has five subunits: alpha(3), beta(3), gamma(1), delta(1), epsilon(1). CF(0) has three main subunits: a(1), b(2) and c(9-12). The alpha and beta chains form an alternating ring which encloses part of the gamma chain. CF(1) is attached to CF(0) by a central stalk formed by the gamma and epsilon chains, while a peripheral stalk is formed by the delta and b chains.</text>
</comment>
<comment type="subcellular location">
    <subcellularLocation>
        <location evidence="1">Cell inner membrane</location>
        <topology evidence="1">Peripheral membrane protein</topology>
    </subcellularLocation>
</comment>
<comment type="similarity">
    <text evidence="1">Belongs to the ATPase alpha/beta chains family.</text>
</comment>
<proteinExistence type="inferred from homology"/>
<organism>
    <name type="scientific">Oleidesulfovibrio alaskensis (strain ATCC BAA-1058 / DSM 17464 / G20)</name>
    <name type="common">Desulfovibrio alaskensis</name>
    <dbReference type="NCBI Taxonomy" id="207559"/>
    <lineage>
        <taxon>Bacteria</taxon>
        <taxon>Pseudomonadati</taxon>
        <taxon>Thermodesulfobacteriota</taxon>
        <taxon>Desulfovibrionia</taxon>
        <taxon>Desulfovibrionales</taxon>
        <taxon>Desulfovibrionaceae</taxon>
        <taxon>Oleidesulfovibrio</taxon>
    </lineage>
</organism>
<keyword id="KW-0066">ATP synthesis</keyword>
<keyword id="KW-0067">ATP-binding</keyword>
<keyword id="KW-0997">Cell inner membrane</keyword>
<keyword id="KW-1003">Cell membrane</keyword>
<keyword id="KW-0139">CF(1)</keyword>
<keyword id="KW-0375">Hydrogen ion transport</keyword>
<keyword id="KW-0406">Ion transport</keyword>
<keyword id="KW-0472">Membrane</keyword>
<keyword id="KW-0547">Nucleotide-binding</keyword>
<keyword id="KW-1185">Reference proteome</keyword>
<keyword id="KW-1278">Translocase</keyword>
<keyword id="KW-0813">Transport</keyword>
<reference key="1">
    <citation type="journal article" date="2011" name="J. Bacteriol.">
        <title>Complete genome sequence and updated annotation of Desulfovibrio alaskensis G20.</title>
        <authorList>
            <person name="Hauser L.J."/>
            <person name="Land M.L."/>
            <person name="Brown S.D."/>
            <person name="Larimer F."/>
            <person name="Keller K.L."/>
            <person name="Rapp-Giles B.J."/>
            <person name="Price M.N."/>
            <person name="Lin M."/>
            <person name="Bruce D.C."/>
            <person name="Detter J.C."/>
            <person name="Tapia R."/>
            <person name="Han C.S."/>
            <person name="Goodwin L.A."/>
            <person name="Cheng J.F."/>
            <person name="Pitluck S."/>
            <person name="Copeland A."/>
            <person name="Lucas S."/>
            <person name="Nolan M."/>
            <person name="Lapidus A.L."/>
            <person name="Palumbo A.V."/>
            <person name="Wall J.D."/>
        </authorList>
    </citation>
    <scope>NUCLEOTIDE SEQUENCE [LARGE SCALE GENOMIC DNA]</scope>
    <source>
        <strain>ATCC BAA-1058 / DSM 17464 / G20</strain>
    </source>
</reference>